<accession>Q9I061</accession>
<protein>
    <recommendedName>
        <fullName evidence="4">Biofilm-associated metzincin protease inhibitor</fullName>
    </recommendedName>
</protein>
<organism>
    <name type="scientific">Pseudomonas aeruginosa (strain ATCC 15692 / DSM 22644 / CIP 104116 / JCM 14847 / LMG 12228 / 1C / PRS 101 / PAO1)</name>
    <dbReference type="NCBI Taxonomy" id="208964"/>
    <lineage>
        <taxon>Bacteria</taxon>
        <taxon>Pseudomonadati</taxon>
        <taxon>Pseudomonadota</taxon>
        <taxon>Gammaproteobacteria</taxon>
        <taxon>Pseudomonadales</taxon>
        <taxon>Pseudomonadaceae</taxon>
        <taxon>Pseudomonas</taxon>
    </lineage>
</organism>
<reference key="1">
    <citation type="journal article" date="2000" name="Nature">
        <title>Complete genome sequence of Pseudomonas aeruginosa PAO1, an opportunistic pathogen.</title>
        <authorList>
            <person name="Stover C.K."/>
            <person name="Pham X.-Q.T."/>
            <person name="Erwin A.L."/>
            <person name="Mizoguchi S.D."/>
            <person name="Warrener P."/>
            <person name="Hickey M.J."/>
            <person name="Brinkman F.S.L."/>
            <person name="Hufnagle W.O."/>
            <person name="Kowalik D.J."/>
            <person name="Lagrou M."/>
            <person name="Garber R.L."/>
            <person name="Goltry L."/>
            <person name="Tolentino E."/>
            <person name="Westbrock-Wadman S."/>
            <person name="Yuan Y."/>
            <person name="Brody L.L."/>
            <person name="Coulter S.N."/>
            <person name="Folger K.R."/>
            <person name="Kas A."/>
            <person name="Larbig K."/>
            <person name="Lim R.M."/>
            <person name="Smith K.A."/>
            <person name="Spencer D.H."/>
            <person name="Wong G.K.-S."/>
            <person name="Wu Z."/>
            <person name="Paulsen I.T."/>
            <person name="Reizer J."/>
            <person name="Saier M.H. Jr."/>
            <person name="Hancock R.E.W."/>
            <person name="Lory S."/>
            <person name="Olson M.V."/>
        </authorList>
    </citation>
    <scope>NUCLEOTIDE SEQUENCE [LARGE SCALE GENOMIC DNA]</scope>
    <source>
        <strain>ATCC 15692 / DSM 22644 / CIP 104116 / JCM 14847 / LMG 12228 / 1C / PRS 101 / PAO1</strain>
    </source>
</reference>
<reference key="2">
    <citation type="journal article" date="2015" name="J. Bacteriol.">
        <title>Mep72, a metzincin protease that is preferentially secreted by biofilms of Pseudomonas aeruginosa.</title>
        <authorList>
            <person name="Passmore I.J."/>
            <person name="Nishikawa K."/>
            <person name="Lilley K.S."/>
            <person name="Bowden S.D."/>
            <person name="Chung J.C."/>
            <person name="Welch M."/>
        </authorList>
    </citation>
    <scope>FUNCTION</scope>
    <scope>SUBCELLULAR LOCATION</scope>
    <scope>INDUCTION</scope>
    <scope>INTERACTION WITH MEP72</scope>
    <source>
        <strain>ATCC 15692 / DSM 22644 / CIP 104116 / JCM 14847 / LMG 12228 / 1C / PRS 101 / PAO1</strain>
    </source>
</reference>
<name>BAMI_PSEAE</name>
<gene>
    <name evidence="4" type="primary">bamI</name>
    <name evidence="5" type="ordered locus">PA2782</name>
</gene>
<proteinExistence type="evidence at protein level"/>
<evidence type="ECO:0000255" key="1"/>
<evidence type="ECO:0000256" key="2">
    <source>
        <dbReference type="SAM" id="MobiDB-lite"/>
    </source>
</evidence>
<evidence type="ECO:0000269" key="3">
    <source>
    </source>
</evidence>
<evidence type="ECO:0000303" key="4">
    <source>
    </source>
</evidence>
<evidence type="ECO:0000312" key="5">
    <source>
        <dbReference type="EMBL" id="AAG06170.1"/>
    </source>
</evidence>
<sequence length="219" mass="22728">MAKTWIYAASAAAIGGALIGGWLLDPAPPEASPQARQSPAAQAAAAPTAALAAPAADATRMLAPTPVTTPAPRERVTLWQGELRSREGAQGIPEYLAQVEPALLDTLALGQVLEMSLPGRERPLQARLASTHNSAGLPVWRGGLVDGDEAESLTVVRGSLETHINVATLDGSYSIIVDNRSGKTRVIDENDIAARSDPHGDHVDAPLAELPPMPPPAQG</sequence>
<comment type="function">
    <text evidence="3">Inhibitor of the metalloendopeptidase Mep72. Forms a protein-protein complex with the protease, which is the product of its coregulated adjacent gene, and probably prevents premature protease activity until the protein has been secreted.</text>
</comment>
<comment type="subcellular location">
    <subcellularLocation>
        <location evidence="1">Cell membrane</location>
        <topology evidence="1">Single-pass membrane protein</topology>
    </subcellularLocation>
</comment>
<comment type="induction">
    <text evidence="3">Constitutes an operon together with PA2783. Its expression is up-regulated in biofilms, while it is poorly expressed in planktonic cells.</text>
</comment>
<dbReference type="EMBL" id="AE004091">
    <property type="protein sequence ID" value="AAG06170.1"/>
    <property type="molecule type" value="Genomic_DNA"/>
</dbReference>
<dbReference type="PIR" id="E83299">
    <property type="entry name" value="E83299"/>
</dbReference>
<dbReference type="RefSeq" id="NP_251472.1">
    <property type="nucleotide sequence ID" value="NC_002516.2"/>
</dbReference>
<dbReference type="RefSeq" id="WP_003124476.1">
    <property type="nucleotide sequence ID" value="NZ_QZGE01000011.1"/>
</dbReference>
<dbReference type="SMR" id="Q9I061"/>
<dbReference type="STRING" id="208964.PA2782"/>
<dbReference type="PaxDb" id="208964-PA2782"/>
<dbReference type="DNASU" id="882771"/>
<dbReference type="GeneID" id="882771"/>
<dbReference type="KEGG" id="pae:PA2782"/>
<dbReference type="PATRIC" id="fig|208964.12.peg.2921"/>
<dbReference type="PseudoCAP" id="PA2782"/>
<dbReference type="HOGENOM" id="CLU_1513773_0_0_6"/>
<dbReference type="InParanoid" id="Q9I061"/>
<dbReference type="OrthoDB" id="6874794at2"/>
<dbReference type="BioCyc" id="PAER208964:G1FZ6-2830-MONOMER"/>
<dbReference type="Proteomes" id="UP000002438">
    <property type="component" value="Chromosome"/>
</dbReference>
<dbReference type="GO" id="GO:0005615">
    <property type="term" value="C:extracellular space"/>
    <property type="evidence" value="ECO:0000314"/>
    <property type="project" value="PseudoCAP"/>
</dbReference>
<dbReference type="GO" id="GO:0005886">
    <property type="term" value="C:plasma membrane"/>
    <property type="evidence" value="ECO:0007669"/>
    <property type="project" value="UniProtKB-SubCell"/>
</dbReference>
<dbReference type="GO" id="GO:0030414">
    <property type="term" value="F:peptidase inhibitor activity"/>
    <property type="evidence" value="ECO:0007669"/>
    <property type="project" value="UniProtKB-KW"/>
</dbReference>
<keyword id="KW-1003">Cell membrane</keyword>
<keyword id="KW-0472">Membrane</keyword>
<keyword id="KW-0481">Metalloenzyme inhibitor</keyword>
<keyword id="KW-0483">Metalloprotease inhibitor</keyword>
<keyword id="KW-0646">Protease inhibitor</keyword>
<keyword id="KW-1185">Reference proteome</keyword>
<keyword id="KW-0812">Transmembrane</keyword>
<keyword id="KW-1133">Transmembrane helix</keyword>
<feature type="chain" id="PRO_0000452833" description="Biofilm-associated metzincin protease inhibitor">
    <location>
        <begin position="1"/>
        <end position="219"/>
    </location>
</feature>
<feature type="transmembrane region" description="Helical" evidence="1">
    <location>
        <begin position="4"/>
        <end position="24"/>
    </location>
</feature>
<feature type="region of interest" description="Disordered" evidence="2">
    <location>
        <begin position="191"/>
        <end position="219"/>
    </location>
</feature>
<feature type="compositionally biased region" description="Basic and acidic residues" evidence="2">
    <location>
        <begin position="191"/>
        <end position="204"/>
    </location>
</feature>
<feature type="compositionally biased region" description="Pro residues" evidence="2">
    <location>
        <begin position="209"/>
        <end position="219"/>
    </location>
</feature>